<name>GDA0_WHEAT</name>
<comment type="function">
    <text>Gliadin is the major seed storage protein in wheat.</text>
</comment>
<comment type="PTM">
    <text evidence="1">Substrate of transglutaminase.</text>
</comment>
<comment type="allergen">
    <text evidence="1">Causes an allergic reaction in human. Is the cause of the celiac disease, also known as celiac sprue or gluten-sensitive enteropathy (By similarity).</text>
</comment>
<comment type="miscellaneous">
    <text>The alpha/beta-gliadins can be divided into 5 homology classes. Sequence divergence between the classes is due to single base substitutions and to duplications or deletions within or near direct repeats. There are more than a 100 copies of the gene for alpha/beta-gliadin per haploid genome.</text>
</comment>
<comment type="similarity">
    <text evidence="3">Belongs to the gliadin/glutenin family.</text>
</comment>
<reference key="1">
    <citation type="journal article" date="1984" name="EMBO J.">
        <title>Developmentally regulated plant genes: the nucleotide sequence of a wheat gliadin genomic clone.</title>
        <authorList>
            <person name="Rafalski J.A."/>
            <person name="Scheets K."/>
            <person name="Metzler M."/>
            <person name="Peterson D.M."/>
            <person name="Hedgcoth C."/>
            <person name="Soll D.G."/>
        </authorList>
    </citation>
    <scope>NUCLEOTIDE SEQUENCE [MRNA]</scope>
    <source>
        <strain>cv. Newton</strain>
    </source>
</reference>
<reference key="2">
    <citation type="journal article" date="1985" name="Nucleic Acids Res.">
        <title>Conservation and variability of wheat alpha/beta-gliadin genes.</title>
        <authorList>
            <person name="Sumner-Smith M."/>
            <person name="Rafalski J.A."/>
            <person name="Sugiyama T."/>
            <person name="Stoll M."/>
            <person name="Soell D."/>
        </authorList>
    </citation>
    <scope>NUCLEOTIDE SEQUENCE [GENOMIC DNA]</scope>
</reference>
<reference key="3">
    <citation type="journal article" date="1984" name="Nucleic Acids Res.">
        <title>Nucleic acid sequence and chromosome assignment of a wheat storage protein gene.</title>
        <authorList>
            <person name="Anderson O.D."/>
            <person name="Litts J.C."/>
            <person name="Gautier M.-F."/>
            <person name="Greene F.C."/>
        </authorList>
    </citation>
    <scope>NUCLEOTIDE SEQUENCE [GENOMIC DNA]</scope>
</reference>
<protein>
    <recommendedName>
        <fullName>Alpha/beta-gliadin</fullName>
    </recommendedName>
    <alternativeName>
        <fullName>Prolamin</fullName>
    </alternativeName>
</protein>
<sequence length="286" mass="32963">MKTFLILVLLAIVATTATTAVRFPVPQLQPQNPSQQQPQEQVPLVQQQQFLGQQQPFPPQQPYPQPQPFPSQLPYLQLQPFPQPQLPYSQPQPFRPQQPYPQPQPQYSQPQQPISQQQQQQQQQQQQQQQQQQILQQILQQQLIPCMDVVLQQHNIAHGRSQVLQQSTYQLLQELCCQHLWQIPEQSQCQAIHNVVHAIILHQQQKQQQQPSSQVSFQQPLQQYPLGQGSFRPSQQNPQAQGSVQPQQLPQFEEIRNLALQTLPAMCNVYIPPYCTIAPFGIFGTN</sequence>
<feature type="signal peptide">
    <location>
        <begin position="1"/>
        <end position="20"/>
    </location>
</feature>
<feature type="chain" id="PRO_0000032267" description="Alpha/beta-gliadin">
    <location>
        <begin position="21"/>
        <end position="286"/>
    </location>
</feature>
<feature type="region of interest" description="Disordered" evidence="2">
    <location>
        <begin position="51"/>
        <end position="120"/>
    </location>
</feature>
<feature type="compositionally biased region" description="Pro residues" evidence="2">
    <location>
        <begin position="56"/>
        <end position="71"/>
    </location>
</feature>
<feature type="compositionally biased region" description="Low complexity" evidence="2">
    <location>
        <begin position="72"/>
        <end position="92"/>
    </location>
</feature>
<feature type="compositionally biased region" description="Pro residues" evidence="2">
    <location>
        <begin position="93"/>
        <end position="104"/>
    </location>
</feature>
<feature type="compositionally biased region" description="Low complexity" evidence="2">
    <location>
        <begin position="105"/>
        <end position="120"/>
    </location>
</feature>
<feature type="sequence conflict" description="In Ref. 1." evidence="3" ref="1">
    <original>Q</original>
    <variation>L</variation>
    <location>
        <position position="37"/>
    </location>
</feature>
<feature type="sequence conflict" description="In Ref. 2; CAA26384." evidence="3" ref="2">
    <original>P</original>
    <variation>Q</variation>
    <location>
        <position position="93"/>
    </location>
</feature>
<feature type="sequence conflict" description="In Ref. 3; CAA25593." evidence="3" ref="3">
    <original>HN</original>
    <variation>LK</variation>
    <location>
        <begin position="193"/>
        <end position="194"/>
    </location>
</feature>
<evidence type="ECO:0000250" key="1"/>
<evidence type="ECO:0000256" key="2">
    <source>
        <dbReference type="SAM" id="MobiDB-lite"/>
    </source>
</evidence>
<evidence type="ECO:0000305" key="3"/>
<organism>
    <name type="scientific">Triticum aestivum</name>
    <name type="common">Wheat</name>
    <dbReference type="NCBI Taxonomy" id="4565"/>
    <lineage>
        <taxon>Eukaryota</taxon>
        <taxon>Viridiplantae</taxon>
        <taxon>Streptophyta</taxon>
        <taxon>Embryophyta</taxon>
        <taxon>Tracheophyta</taxon>
        <taxon>Spermatophyta</taxon>
        <taxon>Magnoliopsida</taxon>
        <taxon>Liliopsida</taxon>
        <taxon>Poales</taxon>
        <taxon>Poaceae</taxon>
        <taxon>BOP clade</taxon>
        <taxon>Pooideae</taxon>
        <taxon>Triticodae</taxon>
        <taxon>Triticeae</taxon>
        <taxon>Triticinae</taxon>
        <taxon>Triticum</taxon>
    </lineage>
</organism>
<proteinExistence type="evidence at transcript level"/>
<dbReference type="EMBL" id="K03076">
    <property type="protein sequence ID" value="AAA34280.1"/>
    <property type="molecule type" value="mRNA"/>
</dbReference>
<dbReference type="EMBL" id="X02539">
    <property type="protein sequence ID" value="CAA26384.1"/>
    <property type="molecule type" value="Genomic_DNA"/>
</dbReference>
<dbReference type="EMBL" id="X01130">
    <property type="protein sequence ID" value="CAA25593.1"/>
    <property type="molecule type" value="Genomic_DNA"/>
</dbReference>
<dbReference type="PIR" id="A03354">
    <property type="entry name" value="EEWTA"/>
</dbReference>
<dbReference type="PIR" id="S07923">
    <property type="entry name" value="S07923"/>
</dbReference>
<dbReference type="STRING" id="4565.P02863"/>
<dbReference type="ABCD" id="P02863">
    <property type="antibodies" value="6 sequenced antibodies"/>
</dbReference>
<dbReference type="EnsemblPlants" id="TraesARI6A03G03205220.1">
    <property type="protein sequence ID" value="TraesARI6A03G03205220.1.CDS1"/>
    <property type="gene ID" value="TraesARI6A03G03205220"/>
</dbReference>
<dbReference type="EnsemblPlants" id="TraesNOR6A03G03280920.1">
    <property type="protein sequence ID" value="TraesNOR6A03G03280920.1.CDS1"/>
    <property type="gene ID" value="TraesNOR6A03G03280920"/>
</dbReference>
<dbReference type="EnsemblPlants" id="TraesSYM6A03G03190620.1">
    <property type="protein sequence ID" value="TraesSYM6A03G03190620.1.CDS1"/>
    <property type="gene ID" value="TraesSYM6A03G03190620"/>
</dbReference>
<dbReference type="Gramene" id="TraesARI6A03G03205220.1">
    <property type="protein sequence ID" value="TraesARI6A03G03205220.1.CDS1"/>
    <property type="gene ID" value="TraesARI6A03G03205220"/>
</dbReference>
<dbReference type="Gramene" id="TraesNOR6A03G03280920.1">
    <property type="protein sequence ID" value="TraesNOR6A03G03280920.1.CDS1"/>
    <property type="gene ID" value="TraesNOR6A03G03280920"/>
</dbReference>
<dbReference type="Gramene" id="TraesSYM6A03G03190620.1">
    <property type="protein sequence ID" value="TraesSYM6A03G03190620.1.CDS1"/>
    <property type="gene ID" value="TraesSYM6A03G03190620"/>
</dbReference>
<dbReference type="Proteomes" id="UP000019116">
    <property type="component" value="Unplaced"/>
</dbReference>
<dbReference type="ExpressionAtlas" id="P02863">
    <property type="expression patterns" value="baseline"/>
</dbReference>
<dbReference type="GO" id="GO:0045735">
    <property type="term" value="F:nutrient reservoir activity"/>
    <property type="evidence" value="ECO:0007669"/>
    <property type="project" value="UniProtKB-KW"/>
</dbReference>
<dbReference type="CDD" id="cd00261">
    <property type="entry name" value="AAI_SS"/>
    <property type="match status" value="1"/>
</dbReference>
<dbReference type="Gene3D" id="1.10.110.10">
    <property type="entry name" value="Plant lipid-transfer and hydrophobic proteins"/>
    <property type="match status" value="1"/>
</dbReference>
<dbReference type="InterPro" id="IPR036312">
    <property type="entry name" value="Bifun_inhib/LTP/seed_sf"/>
</dbReference>
<dbReference type="InterPro" id="IPR016140">
    <property type="entry name" value="Bifunc_inhib/LTP/seed_store"/>
</dbReference>
<dbReference type="InterPro" id="IPR001954">
    <property type="entry name" value="Glia_glutenin"/>
</dbReference>
<dbReference type="PANTHER" id="PTHR33454:SF7">
    <property type="entry name" value="ALPHA_BETA-GLIADIN MM1"/>
    <property type="match status" value="1"/>
</dbReference>
<dbReference type="PANTHER" id="PTHR33454">
    <property type="entry name" value="PROLAMIN PPROL 14P"/>
    <property type="match status" value="1"/>
</dbReference>
<dbReference type="Pfam" id="PF13016">
    <property type="entry name" value="Gliadin"/>
    <property type="match status" value="1"/>
</dbReference>
<dbReference type="PRINTS" id="PR00208">
    <property type="entry name" value="GLIADGLUTEN"/>
</dbReference>
<dbReference type="PRINTS" id="PR00209">
    <property type="entry name" value="GLIADIN"/>
</dbReference>
<dbReference type="SMART" id="SM00499">
    <property type="entry name" value="AAI"/>
    <property type="match status" value="1"/>
</dbReference>
<dbReference type="SUPFAM" id="SSF47699">
    <property type="entry name" value="Bifunctional inhibitor/lipid-transfer protein/seed storage 2S albumin"/>
    <property type="match status" value="1"/>
</dbReference>
<accession>P02863</accession>
<keyword id="KW-0020">Allergen</keyword>
<keyword id="KW-1185">Reference proteome</keyword>
<keyword id="KW-0677">Repeat</keyword>
<keyword id="KW-0708">Seed storage protein</keyword>
<keyword id="KW-0732">Signal</keyword>
<keyword id="KW-0758">Storage protein</keyword>